<gene>
    <name evidence="1" type="primary">rdgC</name>
    <name type="ordered locus">Ent638_0863</name>
</gene>
<comment type="function">
    <text evidence="1">May be involved in recombination.</text>
</comment>
<comment type="subcellular location">
    <subcellularLocation>
        <location evidence="1">Cytoplasm</location>
        <location evidence="1">Nucleoid</location>
    </subcellularLocation>
</comment>
<comment type="similarity">
    <text evidence="1">Belongs to the RdgC family.</text>
</comment>
<feature type="chain" id="PRO_1000058515" description="Recombination-associated protein RdgC">
    <location>
        <begin position="1"/>
        <end position="303"/>
    </location>
</feature>
<accession>A4W767</accession>
<organism>
    <name type="scientific">Enterobacter sp. (strain 638)</name>
    <dbReference type="NCBI Taxonomy" id="399742"/>
    <lineage>
        <taxon>Bacteria</taxon>
        <taxon>Pseudomonadati</taxon>
        <taxon>Pseudomonadota</taxon>
        <taxon>Gammaproteobacteria</taxon>
        <taxon>Enterobacterales</taxon>
        <taxon>Enterobacteriaceae</taxon>
        <taxon>Enterobacter</taxon>
    </lineage>
</organism>
<evidence type="ECO:0000255" key="1">
    <source>
        <dbReference type="HAMAP-Rule" id="MF_00194"/>
    </source>
</evidence>
<dbReference type="EMBL" id="CP000653">
    <property type="protein sequence ID" value="ABP59547.1"/>
    <property type="molecule type" value="Genomic_DNA"/>
</dbReference>
<dbReference type="RefSeq" id="WP_012016268.1">
    <property type="nucleotide sequence ID" value="NC_009436.1"/>
</dbReference>
<dbReference type="SMR" id="A4W767"/>
<dbReference type="STRING" id="399742.Ent638_0863"/>
<dbReference type="GeneID" id="93307990"/>
<dbReference type="KEGG" id="ent:Ent638_0863"/>
<dbReference type="eggNOG" id="COG2974">
    <property type="taxonomic scope" value="Bacteria"/>
</dbReference>
<dbReference type="HOGENOM" id="CLU_052038_1_1_6"/>
<dbReference type="OrthoDB" id="5290530at2"/>
<dbReference type="Proteomes" id="UP000000230">
    <property type="component" value="Chromosome"/>
</dbReference>
<dbReference type="GO" id="GO:0043590">
    <property type="term" value="C:bacterial nucleoid"/>
    <property type="evidence" value="ECO:0007669"/>
    <property type="project" value="TreeGrafter"/>
</dbReference>
<dbReference type="GO" id="GO:0005737">
    <property type="term" value="C:cytoplasm"/>
    <property type="evidence" value="ECO:0007669"/>
    <property type="project" value="UniProtKB-UniRule"/>
</dbReference>
<dbReference type="GO" id="GO:0003690">
    <property type="term" value="F:double-stranded DNA binding"/>
    <property type="evidence" value="ECO:0007669"/>
    <property type="project" value="TreeGrafter"/>
</dbReference>
<dbReference type="GO" id="GO:0006310">
    <property type="term" value="P:DNA recombination"/>
    <property type="evidence" value="ECO:0007669"/>
    <property type="project" value="UniProtKB-UniRule"/>
</dbReference>
<dbReference type="GO" id="GO:0000018">
    <property type="term" value="P:regulation of DNA recombination"/>
    <property type="evidence" value="ECO:0007669"/>
    <property type="project" value="TreeGrafter"/>
</dbReference>
<dbReference type="HAMAP" id="MF_00194">
    <property type="entry name" value="RdgC"/>
    <property type="match status" value="1"/>
</dbReference>
<dbReference type="InterPro" id="IPR007476">
    <property type="entry name" value="RdgC"/>
</dbReference>
<dbReference type="NCBIfam" id="NF001460">
    <property type="entry name" value="PRK00321.1-1"/>
    <property type="match status" value="1"/>
</dbReference>
<dbReference type="NCBIfam" id="NF001462">
    <property type="entry name" value="PRK00321.1-3"/>
    <property type="match status" value="1"/>
</dbReference>
<dbReference type="NCBIfam" id="NF001464">
    <property type="entry name" value="PRK00321.1-5"/>
    <property type="match status" value="1"/>
</dbReference>
<dbReference type="PANTHER" id="PTHR38103">
    <property type="entry name" value="RECOMBINATION-ASSOCIATED PROTEIN RDGC"/>
    <property type="match status" value="1"/>
</dbReference>
<dbReference type="PANTHER" id="PTHR38103:SF1">
    <property type="entry name" value="RECOMBINATION-ASSOCIATED PROTEIN RDGC"/>
    <property type="match status" value="1"/>
</dbReference>
<dbReference type="Pfam" id="PF04381">
    <property type="entry name" value="RdgC"/>
    <property type="match status" value="1"/>
</dbReference>
<protein>
    <recommendedName>
        <fullName evidence="1">Recombination-associated protein RdgC</fullName>
    </recommendedName>
</protein>
<reference key="1">
    <citation type="journal article" date="2010" name="PLoS Genet.">
        <title>Genome sequence of the plant growth promoting endophytic bacterium Enterobacter sp. 638.</title>
        <authorList>
            <person name="Taghavi S."/>
            <person name="van der Lelie D."/>
            <person name="Hoffman A."/>
            <person name="Zhang Y.B."/>
            <person name="Walla M.D."/>
            <person name="Vangronsveld J."/>
            <person name="Newman L."/>
            <person name="Monchy S."/>
        </authorList>
    </citation>
    <scope>NUCLEOTIDE SEQUENCE [LARGE SCALE GENOMIC DNA]</scope>
    <source>
        <strain>638</strain>
    </source>
</reference>
<keyword id="KW-0963">Cytoplasm</keyword>
<keyword id="KW-0233">DNA recombination</keyword>
<name>RDGC_ENT38</name>
<sequence>MLWFKNLMVYRLSREVSLQAEEMEKQLAAYTFTPCGSQDMAKTGWVAPMGSQSDALTHTTNGQIILCARKEEKILPSPVVKQALEAKIFKLEAEQGRKLKKTEKDSLKDEVLHSLLPRAFSRFNQTMMWIDTVNDLIMVDCASAKKAEDTLALLRKSLGSLPVVPLTMENPIELTLTEWVRSGSPAQGFQLLDEAELKAILEDGGVIRAKKQDLVCDEIAVHIEAGKLVTKLALDWQQRIQFVMCDDGSIKRLKFCDELRDQNEDIEREDVSGRFDADFILMTGELAALIKNLVEGLGGEAQR</sequence>
<proteinExistence type="inferred from homology"/>